<evidence type="ECO:0000255" key="1"/>
<evidence type="ECO:0000255" key="2">
    <source>
        <dbReference type="PROSITE-ProRule" id="PRU01209"/>
    </source>
</evidence>
<evidence type="ECO:0000269" key="3">
    <source>
    </source>
</evidence>
<evidence type="ECO:0000269" key="4">
    <source>
    </source>
</evidence>
<evidence type="ECO:0000269" key="5">
    <source>
    </source>
</evidence>
<evidence type="ECO:0000269" key="6">
    <source>
    </source>
</evidence>
<evidence type="ECO:0000269" key="7">
    <source ref="3"/>
</evidence>
<evidence type="ECO:0000303" key="8">
    <source>
    </source>
</evidence>
<evidence type="ECO:0000303" key="9">
    <source>
    </source>
</evidence>
<evidence type="ECO:0000303" key="10">
    <source>
    </source>
</evidence>
<evidence type="ECO:0000303" key="11">
    <source ref="1"/>
</evidence>
<evidence type="ECO:0000303" key="12">
    <source ref="3"/>
</evidence>
<evidence type="ECO:0000305" key="13"/>
<evidence type="ECO:0000305" key="14">
    <source>
    </source>
</evidence>
<evidence type="ECO:0000305" key="15">
    <source>
    </source>
</evidence>
<evidence type="ECO:0000305" key="16">
    <source ref="1"/>
</evidence>
<evidence type="ECO:0000305" key="17">
    <source ref="3"/>
</evidence>
<evidence type="ECO:0000312" key="18">
    <source>
        <dbReference type="EMBL" id="QPD99052.1"/>
    </source>
</evidence>
<accession>P86822</accession>
<accession>A0A7S8MV80</accession>
<accession>P86823</accession>
<name>KBX2_TITSE</name>
<comment type="function">
    <molecule>Ts19 fragment I</molecule>
    <text evidence="7 15">May function as a voltage-gated potassium channel blocker and may have cytolytic activity (Ref.3). Is often not detected in the tested venom fractions, suggesting that the toxin is likely subject to frequent processing within the venom (PubMed:26116782).</text>
</comment>
<comment type="function">
    <molecule>Ts19 fragment II</molecule>
    <text evidence="5">Specific and reversible blocker of the potassium channel Kv1.2/KCNA2 (IC(50)=544 nM).</text>
</comment>
<comment type="function">
    <molecule>Ts19 fragment III</molecule>
    <text evidence="5">Shows cytolytic effects on erythrocytes and induces non-selective pore formation when high concentrations (300 nM) are applied on oocytes.</text>
</comment>
<comment type="function">
    <molecule>Cryptide TyPep-17</molecule>
    <text evidence="6">Does not cause hemolysis, mast cell degranulation, LDH release, and does not have antimicrobial activity. Does not cause edema and pain.</text>
</comment>
<comment type="subcellular location">
    <subcellularLocation>
        <location evidence="3 4 5 7">Secreted</location>
    </subcellularLocation>
</comment>
<comment type="tissue specificity">
    <text evidence="14">Expressed by the venom gland.</text>
</comment>
<comment type="miscellaneous">
    <molecule>Ts19 fragment II</molecule>
    <text evidence="5">Negative results: does not show inhibiting activities on most potassium channels tested and on all sodium channels tested. Here is the list of all channels that are not inhibited by the toxin: Kv1.1/KCNA1, Kv1.3/KCNA3, Kv1.4/KCNA4, Kv1.5/KCNA5, Kv1.6/KCNA6, Kv2.1/KCNB1, Kv3.1/KCNC1, Kv4.2/KCND2, Kv7.1/KCNQ1, Kv7.2/KCNQ2, Kv7.4/KCNQ4, Kv7.5/KCNA5, Kv10.1/KCNH1/EAG1, Kv11.1/KCNH2/ERG1, Shaker/Sh, Nav1.2/SCN2A, Nav1.4/SCN4A, Nav1.5/SCN5A, Nav1.6/SCN8A, and B.germanica Nav.</text>
</comment>
<comment type="miscellaneous">
    <molecule>Ts19 fragment III</molecule>
    <text evidence="5">Negative results: does not show blocking effet on Kv1.2/KCNA2 potassium channels.</text>
</comment>
<comment type="miscellaneous">
    <text evidence="14">The fragments 26-37, 34-42 and 43-52 described in PubMed:18718845 correspond to the propeptide and some additional residues of the chain. The authors do not know if these fragments are the result of the post-translational maturation process, or if they have a biological activity of their own.</text>
</comment>
<comment type="similarity">
    <text evidence="1">Belongs to the long chain scorpion toxin family. Class 2 subfamily.</text>
</comment>
<dbReference type="EMBL" id="MT450716">
    <property type="protein sequence ID" value="QPD99052.1"/>
    <property type="molecule type" value="mRNA"/>
</dbReference>
<dbReference type="SMR" id="P86822"/>
<dbReference type="GO" id="GO:0005576">
    <property type="term" value="C:extracellular region"/>
    <property type="evidence" value="ECO:0007669"/>
    <property type="project" value="UniProtKB-SubCell"/>
</dbReference>
<dbReference type="GO" id="GO:0015459">
    <property type="term" value="F:potassium channel regulator activity"/>
    <property type="evidence" value="ECO:0007669"/>
    <property type="project" value="UniProtKB-KW"/>
</dbReference>
<dbReference type="GO" id="GO:0090729">
    <property type="term" value="F:toxin activity"/>
    <property type="evidence" value="ECO:0007669"/>
    <property type="project" value="UniProtKB-KW"/>
</dbReference>
<dbReference type="GO" id="GO:0031640">
    <property type="term" value="P:killing of cells of another organism"/>
    <property type="evidence" value="ECO:0007669"/>
    <property type="project" value="UniProtKB-KW"/>
</dbReference>
<dbReference type="InterPro" id="IPR029237">
    <property type="entry name" value="Long_scorpion_toxin_alpha/beta"/>
</dbReference>
<dbReference type="Pfam" id="PF14866">
    <property type="entry name" value="Scorpion_toxin_alpha-beta"/>
    <property type="match status" value="1"/>
</dbReference>
<dbReference type="PROSITE" id="PS51862">
    <property type="entry name" value="BSPN_CSAB"/>
    <property type="match status" value="1"/>
</dbReference>
<keyword id="KW-0204">Cytolysis</keyword>
<keyword id="KW-0903">Direct protein sequencing</keyword>
<keyword id="KW-1015">Disulfide bond</keyword>
<keyword id="KW-0872">Ion channel impairing toxin</keyword>
<keyword id="KW-0528">Neurotoxin</keyword>
<keyword id="KW-0632">Potassium channel impairing toxin</keyword>
<keyword id="KW-0964">Secreted</keyword>
<keyword id="KW-0732">Signal</keyword>
<keyword id="KW-0800">Toxin</keyword>
<keyword id="KW-1220">Voltage-gated potassium channel impairing toxin</keyword>
<proteinExistence type="evidence at protein level"/>
<organism>
    <name type="scientific">Tityus serrulatus</name>
    <name type="common">Brazilian scorpion</name>
    <dbReference type="NCBI Taxonomy" id="6887"/>
    <lineage>
        <taxon>Eukaryota</taxon>
        <taxon>Metazoa</taxon>
        <taxon>Ecdysozoa</taxon>
        <taxon>Arthropoda</taxon>
        <taxon>Chelicerata</taxon>
        <taxon>Arachnida</taxon>
        <taxon>Scorpiones</taxon>
        <taxon>Buthida</taxon>
        <taxon>Buthoidea</taxon>
        <taxon>Buthidae</taxon>
        <taxon>Tityus</taxon>
    </lineage>
</organism>
<reference key="1">
    <citation type="journal article" date="2012" name="O. J. Gen.">
        <title>Transcriptome analysis of the Tityus serrulatus scorpion venom gland.</title>
        <authorList>
            <person name="Alvarenga E.R."/>
            <person name="Mendes T.M."/>
            <person name="Magalhaes B.F."/>
            <person name="Siqueira F.F."/>
            <person name="Dantas A.E."/>
            <person name="Barroca T.M."/>
            <person name="Horta C.C."/>
            <person name="Kalapothakis E."/>
        </authorList>
    </citation>
    <scope>NUCLEOTIDE SEQUENCE [MRNA]</scope>
    <source>
        <tissue>Venom gland</tissue>
    </source>
</reference>
<reference evidence="18" key="2">
    <citation type="journal article" date="2021" name="Toxicon">
        <title>Novel components of Tityus serrulatus venom: a transcriptomic approach.</title>
        <authorList>
            <person name="Kalapothakis Y."/>
            <person name="Miranda K."/>
            <person name="Pereira A.H."/>
            <person name="Witt A.S.A."/>
            <person name="Marani C."/>
            <person name="Martins A.P."/>
            <person name="Leal H.G."/>
            <person name="Campos-Junior E."/>
            <person name="Pimenta A.M.C."/>
            <person name="Borges A."/>
            <person name="Chavez-Olortegui C."/>
            <person name="Kalapothakis E."/>
        </authorList>
    </citation>
    <scope>NUCLEOTIDE SEQUENCE [MRNA]</scope>
    <source>
        <tissue>Telson</tissue>
    </source>
</reference>
<reference key="3">
    <citation type="submission" date="2013-02" db="UniProtKB">
        <title>Isolation and electrophysiological characterization of a new potassium channel blocker from Tityus serrulatus venom.</title>
        <authorList>
            <person name="Cerni F.A."/>
            <person name="Amorim F.G."/>
            <person name="Bordon K.C.F."/>
            <person name="Arantes E.C."/>
        </authorList>
    </citation>
    <scope>PROTEIN SEQUENCE OF 34-90</scope>
    <scope>FUNCTION</scope>
    <scope>SUBCELLULAR LOCATION</scope>
    <source>
        <tissue>Venom</tissue>
    </source>
</reference>
<reference key="4">
    <citation type="journal article" date="2016" name="Peptides">
        <title>Isolation and characterization of Ts19 Fragment II, a new long-chain potassium channel toxin from Tityus serrulatus venom.</title>
        <authorList>
            <person name="Cerni F.A."/>
            <person name="Pucca M.B."/>
            <person name="Amorim F.G."/>
            <person name="de Castro Figueiredo Bordon K."/>
            <person name="Echterbille J."/>
            <person name="Quinton L."/>
            <person name="De Pauw E."/>
            <person name="Peigneur S."/>
            <person name="Tytgat J."/>
            <person name="Arantes E.C."/>
        </authorList>
    </citation>
    <scope>PROTEIN SEQUENCE OF 43-91</scope>
    <scope>SYNTHESIS OF 34-42</scope>
    <scope>FUNCTION</scope>
    <scope>SUBCELLULAR LOCATION</scope>
    <source>
        <tissue>Venom</tissue>
    </source>
</reference>
<reference key="5">
    <citation type="journal article" date="2008" name="Toxicon">
        <title>Tityus serrulatus venom peptidomics: assessing venom peptide diversity.</title>
        <authorList>
            <person name="Rates B."/>
            <person name="Ferraz K.K."/>
            <person name="Borges M.H."/>
            <person name="Richardson M."/>
            <person name="De Lima M.E."/>
            <person name="Pimenta A.M."/>
        </authorList>
    </citation>
    <scope>PROTEIN SEQUENCE OF 26-52</scope>
    <scope>SUBCELLULAR LOCATION</scope>
    <source>
        <tissue>Venom</tissue>
    </source>
</reference>
<reference key="6">
    <citation type="journal article" date="2014" name="Toxicon">
        <title>Influence of post-starvation extraction time and prey-specific diet in Tityus serrulatus scorpion venom composition and hyaluronidase activity.</title>
        <authorList>
            <person name="Pucca M.B."/>
            <person name="Amorim F.G."/>
            <person name="Cerni F.A."/>
            <person name="Bordon K.C.F."/>
            <person name="Cardoso I.A."/>
            <person name="Anjolette F.A."/>
            <person name="Arantes E.C."/>
        </authorList>
    </citation>
    <scope>PROTEIN SEQUENCE OF 42-63</scope>
    <scope>SUBCELLULAR LOCATION</scope>
    <source>
        <tissue>Venom</tissue>
    </source>
</reference>
<reference key="7">
    <citation type="journal article" date="2024" name="J. Nat. Prod.">
        <title>Profiling the linear peptides of venom from the Brazilian scorpion Tityus serrulatus: structural and functional characterization.</title>
        <authorList>
            <person name="Dias N.B."/>
            <person name="de Souza B.M."/>
            <person name="Cid-Alda F."/>
            <person name="Dorce V.A.C."/>
            <person name="Cocchi F.K."/>
            <person name="Palma M.S."/>
        </authorList>
    </citation>
    <scope>PROTEIN SEQUENCE OF 26-34 (TYPEP-17)</scope>
    <scope>IDENTIFICATION BY MASS SPECTROMETRY</scope>
    <scope>SUBCELLULAR LOCATION</scope>
    <scope>SYNTHESIS OF 26-34</scope>
    <scope>FUNCTION</scope>
    <scope>BIOASSAY</scope>
    <source>
        <tissue>Venom</tissue>
    </source>
</reference>
<sequence>MVATNRCCVFALLFALLLVHSLTEAGKGKEILGKIKEKIIEAKDKMKAGWERLTSQSEYACPAIDKFCEDHCAAKKAVGKCDDFKCNCIKL</sequence>
<feature type="signal peptide" evidence="1">
    <location>
        <begin position="1"/>
        <end position="25"/>
    </location>
</feature>
<feature type="peptide" id="PRO_0000461726" description="Cryptide TyPep-17" evidence="6">
    <location>
        <begin position="26"/>
        <end position="34"/>
    </location>
</feature>
<feature type="peptide" id="PRO_0000422388" description="Ts19 fragment I" evidence="7">
    <location>
        <begin position="34"/>
        <end position="90"/>
    </location>
</feature>
<feature type="peptide" id="PRO_0000438647" description="Ts19 fragment III" evidence="3">
    <location>
        <begin position="34"/>
        <end position="42"/>
    </location>
</feature>
<feature type="peptide" id="PRO_0000422389" description="Ts19 fragment II" evidence="5 7">
    <location>
        <begin position="43"/>
        <end position="91"/>
    </location>
</feature>
<feature type="domain" description="BetaSPN-type CS-alpha/beta" evidence="2">
    <location>
        <begin position="58"/>
        <end position="91"/>
    </location>
</feature>
<feature type="disulfide bond" evidence="2">
    <location>
        <begin position="61"/>
        <end position="81"/>
    </location>
</feature>
<feature type="disulfide bond" evidence="2">
    <location>
        <begin position="68"/>
        <end position="86"/>
    </location>
</feature>
<feature type="disulfide bond" evidence="2">
    <location>
        <begin position="72"/>
        <end position="88"/>
    </location>
</feature>
<feature type="sequence conflict" description="In Ref. 6; AA sequence." evidence="13" ref="6">
    <original>C</original>
    <variation>W</variation>
    <location>
        <position position="61"/>
    </location>
</feature>
<protein>
    <recommendedName>
        <fullName evidence="16">Tityustoxin-19</fullName>
        <shortName evidence="11">Ts19</shortName>
    </recommendedName>
    <alternativeName>
        <fullName evidence="8">Potassium channel toxin beta-Ktx 2</fullName>
    </alternativeName>
    <component>
        <recommendedName>
            <fullName evidence="10">Cryptide TyPep-17</fullName>
        </recommendedName>
    </component>
    <component>
        <recommendedName>
            <fullName evidence="12">Ts19 fragment I</fullName>
        </recommendedName>
        <alternativeName>
            <fullName evidence="17">Potassium channel toxin beta-Ktx 2-1</fullName>
        </alternativeName>
    </component>
    <component>
        <recommendedName>
            <fullName evidence="9 12">Ts19 fragment II</fullName>
            <shortName evidence="9">Ts19 Frag-II</shortName>
        </recommendedName>
        <alternativeName>
            <fullName evidence="17">Potassium channel toxin beta-Ktx 2-2</fullName>
        </alternativeName>
    </component>
    <component>
        <recommendedName>
            <fullName evidence="9">Ts19 fragment III</fullName>
            <shortName evidence="9">Ts19 Frag-III</shortName>
        </recommendedName>
    </component>
</protein>